<accession>B1I293</accession>
<comment type="function">
    <text evidence="1">This protein is involved in the repair of mismatches in DNA. It is required for dam-dependent methyl-directed DNA mismatch repair. May act as a 'molecular matchmaker', a protein that promotes the formation of a stable complex between two or more DNA-binding proteins in an ATP-dependent manner without itself being part of a final effector complex.</text>
</comment>
<comment type="similarity">
    <text evidence="1">Belongs to the DNA mismatch repair MutL/HexB family.</text>
</comment>
<protein>
    <recommendedName>
        <fullName evidence="1">DNA mismatch repair protein MutL</fullName>
    </recommendedName>
</protein>
<organism>
    <name type="scientific">Desulforudis audaxviator (strain MP104C)</name>
    <dbReference type="NCBI Taxonomy" id="477974"/>
    <lineage>
        <taxon>Bacteria</taxon>
        <taxon>Bacillati</taxon>
        <taxon>Bacillota</taxon>
        <taxon>Clostridia</taxon>
        <taxon>Thermoanaerobacterales</taxon>
        <taxon>Candidatus Desulforudaceae</taxon>
        <taxon>Candidatus Desulforudis</taxon>
    </lineage>
</organism>
<keyword id="KW-0227">DNA damage</keyword>
<keyword id="KW-0234">DNA repair</keyword>
<keyword id="KW-1185">Reference proteome</keyword>
<proteinExistence type="inferred from homology"/>
<reference key="1">
    <citation type="submission" date="2007-10" db="EMBL/GenBank/DDBJ databases">
        <title>Complete sequence of chromosome of Desulforudis audaxviator MP104C.</title>
        <authorList>
            <person name="Copeland A."/>
            <person name="Lucas S."/>
            <person name="Lapidus A."/>
            <person name="Barry K."/>
            <person name="Glavina del Rio T."/>
            <person name="Dalin E."/>
            <person name="Tice H."/>
            <person name="Bruce D."/>
            <person name="Pitluck S."/>
            <person name="Lowry S.R."/>
            <person name="Larimer F."/>
            <person name="Land M.L."/>
            <person name="Hauser L."/>
            <person name="Kyrpides N."/>
            <person name="Ivanova N.N."/>
            <person name="Richardson P."/>
        </authorList>
    </citation>
    <scope>NUCLEOTIDE SEQUENCE [LARGE SCALE GENOMIC DNA]</scope>
    <source>
        <strain>MP104C</strain>
    </source>
</reference>
<gene>
    <name evidence="1" type="primary">mutL</name>
    <name type="ordered locus">Daud_0554</name>
</gene>
<evidence type="ECO:0000255" key="1">
    <source>
        <dbReference type="HAMAP-Rule" id="MF_00149"/>
    </source>
</evidence>
<feature type="chain" id="PRO_1000096646" description="DNA mismatch repair protein MutL">
    <location>
        <begin position="1"/>
        <end position="565"/>
    </location>
</feature>
<name>MUTL_DESAP</name>
<sequence length="565" mass="60578">MARIRVLDADTVSRIAAGEVVERPAAVVKELVENALDAGARVVHIDIAAGGLERITVTDDGCGMEPGDAELALQRHATSKITAAEDLEAVRTLGFRGEALPSIAAVSRLTLRTRPAASSAGTVLETEGGLVLSAGVSGGPPGTVVTVRDLFFNTPARKKFVRSAAHEGAMISEMVGRLALSRPEVAFRLTVNGRQVLATSGSGDLLDAIGAVFGAAVAREMVPVRFEERGLGVSGYVGRPGVSRSSRRHQVFFVNGRYIRSAYLGAAAEESLHGAMPAGRHAVLVLHLSVEPGMVDVNVHPAKHEVRFSQPRDVYVVVHRAVREALHREIQIPVEECGHLESACFPGAGTGFRIPVQVTFQGGEPELREESTGYQGFPQLQPLGFLPPAYILAGGADGLYILDQHAAHERVLFEQYLRTLEQSAGKQLLVPVMVEIRGREAQTLEDYGPFLRQAGFEVDPFGEGAYLIRTVPSFLRPGAEAVLLTDVLDRLAGERPVDADAFRRVVAAVLACHRAVRGGDKPAGPEAAALLTDLGRCAEPYLCPHGRPTLIRIGFPELARRFQRE</sequence>
<dbReference type="EMBL" id="CP000860">
    <property type="protein sequence ID" value="ACA59095.1"/>
    <property type="molecule type" value="Genomic_DNA"/>
</dbReference>
<dbReference type="RefSeq" id="WP_012301684.1">
    <property type="nucleotide sequence ID" value="NC_010424.1"/>
</dbReference>
<dbReference type="SMR" id="B1I293"/>
<dbReference type="STRING" id="477974.Daud_0554"/>
<dbReference type="KEGG" id="dau:Daud_0554"/>
<dbReference type="eggNOG" id="COG0323">
    <property type="taxonomic scope" value="Bacteria"/>
</dbReference>
<dbReference type="HOGENOM" id="CLU_004131_4_3_9"/>
<dbReference type="OrthoDB" id="9763467at2"/>
<dbReference type="Proteomes" id="UP000008544">
    <property type="component" value="Chromosome"/>
</dbReference>
<dbReference type="GO" id="GO:0032300">
    <property type="term" value="C:mismatch repair complex"/>
    <property type="evidence" value="ECO:0007669"/>
    <property type="project" value="InterPro"/>
</dbReference>
<dbReference type="GO" id="GO:0005524">
    <property type="term" value="F:ATP binding"/>
    <property type="evidence" value="ECO:0007669"/>
    <property type="project" value="InterPro"/>
</dbReference>
<dbReference type="GO" id="GO:0016887">
    <property type="term" value="F:ATP hydrolysis activity"/>
    <property type="evidence" value="ECO:0007669"/>
    <property type="project" value="InterPro"/>
</dbReference>
<dbReference type="GO" id="GO:0140664">
    <property type="term" value="F:ATP-dependent DNA damage sensor activity"/>
    <property type="evidence" value="ECO:0007669"/>
    <property type="project" value="InterPro"/>
</dbReference>
<dbReference type="GO" id="GO:0030983">
    <property type="term" value="F:mismatched DNA binding"/>
    <property type="evidence" value="ECO:0007669"/>
    <property type="project" value="InterPro"/>
</dbReference>
<dbReference type="GO" id="GO:0006298">
    <property type="term" value="P:mismatch repair"/>
    <property type="evidence" value="ECO:0007669"/>
    <property type="project" value="UniProtKB-UniRule"/>
</dbReference>
<dbReference type="CDD" id="cd16926">
    <property type="entry name" value="HATPase_MutL-MLH-PMS-like"/>
    <property type="match status" value="1"/>
</dbReference>
<dbReference type="CDD" id="cd00782">
    <property type="entry name" value="MutL_Trans"/>
    <property type="match status" value="1"/>
</dbReference>
<dbReference type="FunFam" id="3.30.565.10:FF:000003">
    <property type="entry name" value="DNA mismatch repair endonuclease MutL"/>
    <property type="match status" value="1"/>
</dbReference>
<dbReference type="Gene3D" id="3.30.230.10">
    <property type="match status" value="1"/>
</dbReference>
<dbReference type="Gene3D" id="3.30.565.10">
    <property type="entry name" value="Histidine kinase-like ATPase, C-terminal domain"/>
    <property type="match status" value="1"/>
</dbReference>
<dbReference type="Gene3D" id="3.30.1540.20">
    <property type="entry name" value="MutL, C-terminal domain, dimerisation subdomain"/>
    <property type="match status" value="1"/>
</dbReference>
<dbReference type="Gene3D" id="3.30.1370.100">
    <property type="entry name" value="MutL, C-terminal domain, regulatory subdomain"/>
    <property type="match status" value="1"/>
</dbReference>
<dbReference type="HAMAP" id="MF_00149">
    <property type="entry name" value="DNA_mis_repair"/>
    <property type="match status" value="1"/>
</dbReference>
<dbReference type="InterPro" id="IPR014762">
    <property type="entry name" value="DNA_mismatch_repair_CS"/>
</dbReference>
<dbReference type="InterPro" id="IPR020667">
    <property type="entry name" value="DNA_mismatch_repair_MutL"/>
</dbReference>
<dbReference type="InterPro" id="IPR013507">
    <property type="entry name" value="DNA_mismatch_S5_2-like"/>
</dbReference>
<dbReference type="InterPro" id="IPR036890">
    <property type="entry name" value="HATPase_C_sf"/>
</dbReference>
<dbReference type="InterPro" id="IPR002099">
    <property type="entry name" value="MutL/Mlh/PMS"/>
</dbReference>
<dbReference type="InterPro" id="IPR038973">
    <property type="entry name" value="MutL/Mlh/Pms-like"/>
</dbReference>
<dbReference type="InterPro" id="IPR014790">
    <property type="entry name" value="MutL_C"/>
</dbReference>
<dbReference type="InterPro" id="IPR042120">
    <property type="entry name" value="MutL_C_dimsub"/>
</dbReference>
<dbReference type="InterPro" id="IPR042121">
    <property type="entry name" value="MutL_C_regsub"/>
</dbReference>
<dbReference type="InterPro" id="IPR037198">
    <property type="entry name" value="MutL_C_sf"/>
</dbReference>
<dbReference type="InterPro" id="IPR020568">
    <property type="entry name" value="Ribosomal_Su5_D2-typ_SF"/>
</dbReference>
<dbReference type="InterPro" id="IPR014721">
    <property type="entry name" value="Ribsml_uS5_D2-typ_fold_subgr"/>
</dbReference>
<dbReference type="NCBIfam" id="TIGR00585">
    <property type="entry name" value="mutl"/>
    <property type="match status" value="1"/>
</dbReference>
<dbReference type="PANTHER" id="PTHR10073">
    <property type="entry name" value="DNA MISMATCH REPAIR PROTEIN MLH, PMS, MUTL"/>
    <property type="match status" value="1"/>
</dbReference>
<dbReference type="PANTHER" id="PTHR10073:SF12">
    <property type="entry name" value="DNA MISMATCH REPAIR PROTEIN MLH1"/>
    <property type="match status" value="1"/>
</dbReference>
<dbReference type="Pfam" id="PF01119">
    <property type="entry name" value="DNA_mis_repair"/>
    <property type="match status" value="1"/>
</dbReference>
<dbReference type="Pfam" id="PF13589">
    <property type="entry name" value="HATPase_c_3"/>
    <property type="match status" value="1"/>
</dbReference>
<dbReference type="Pfam" id="PF08676">
    <property type="entry name" value="MutL_C"/>
    <property type="match status" value="1"/>
</dbReference>
<dbReference type="SMART" id="SM01340">
    <property type="entry name" value="DNA_mis_repair"/>
    <property type="match status" value="1"/>
</dbReference>
<dbReference type="SMART" id="SM00853">
    <property type="entry name" value="MutL_C"/>
    <property type="match status" value="1"/>
</dbReference>
<dbReference type="SUPFAM" id="SSF55874">
    <property type="entry name" value="ATPase domain of HSP90 chaperone/DNA topoisomerase II/histidine kinase"/>
    <property type="match status" value="1"/>
</dbReference>
<dbReference type="SUPFAM" id="SSF118116">
    <property type="entry name" value="DNA mismatch repair protein MutL"/>
    <property type="match status" value="1"/>
</dbReference>
<dbReference type="SUPFAM" id="SSF54211">
    <property type="entry name" value="Ribosomal protein S5 domain 2-like"/>
    <property type="match status" value="1"/>
</dbReference>
<dbReference type="PROSITE" id="PS00058">
    <property type="entry name" value="DNA_MISMATCH_REPAIR_1"/>
    <property type="match status" value="1"/>
</dbReference>